<accession>A1A7C2</accession>
<keyword id="KW-0028">Amino-acid biosynthesis</keyword>
<keyword id="KW-0100">Branched-chain amino acid biosynthesis</keyword>
<keyword id="KW-0963">Cytoplasm</keyword>
<keyword id="KW-0432">Leucine biosynthesis</keyword>
<keyword id="KW-0464">Manganese</keyword>
<keyword id="KW-0479">Metal-binding</keyword>
<keyword id="KW-1185">Reference proteome</keyword>
<keyword id="KW-0808">Transferase</keyword>
<dbReference type="EC" id="2.3.3.13" evidence="1"/>
<dbReference type="EMBL" id="CP000468">
    <property type="protein sequence ID" value="ABI99561.1"/>
    <property type="molecule type" value="Genomic_DNA"/>
</dbReference>
<dbReference type="RefSeq" id="WP_000082846.1">
    <property type="nucleotide sequence ID" value="NZ_CADILS010000095.1"/>
</dbReference>
<dbReference type="SMR" id="A1A7C2"/>
<dbReference type="GeneID" id="75202109"/>
<dbReference type="KEGG" id="ecv:APECO1_1909"/>
<dbReference type="HOGENOM" id="CLU_022158_0_1_6"/>
<dbReference type="UniPathway" id="UPA00048">
    <property type="reaction ID" value="UER00070"/>
</dbReference>
<dbReference type="Proteomes" id="UP000008216">
    <property type="component" value="Chromosome"/>
</dbReference>
<dbReference type="GO" id="GO:0005829">
    <property type="term" value="C:cytosol"/>
    <property type="evidence" value="ECO:0007669"/>
    <property type="project" value="TreeGrafter"/>
</dbReference>
<dbReference type="GO" id="GO:0003852">
    <property type="term" value="F:2-isopropylmalate synthase activity"/>
    <property type="evidence" value="ECO:0007669"/>
    <property type="project" value="UniProtKB-UniRule"/>
</dbReference>
<dbReference type="GO" id="GO:0003985">
    <property type="term" value="F:acetyl-CoA C-acetyltransferase activity"/>
    <property type="evidence" value="ECO:0007669"/>
    <property type="project" value="UniProtKB-UniRule"/>
</dbReference>
<dbReference type="GO" id="GO:0030145">
    <property type="term" value="F:manganese ion binding"/>
    <property type="evidence" value="ECO:0007669"/>
    <property type="project" value="UniProtKB-UniRule"/>
</dbReference>
<dbReference type="GO" id="GO:0009098">
    <property type="term" value="P:L-leucine biosynthetic process"/>
    <property type="evidence" value="ECO:0007669"/>
    <property type="project" value="UniProtKB-UniRule"/>
</dbReference>
<dbReference type="CDD" id="cd07940">
    <property type="entry name" value="DRE_TIM_IPMS"/>
    <property type="match status" value="1"/>
</dbReference>
<dbReference type="FunFam" id="1.10.238.260:FF:000001">
    <property type="entry name" value="2-isopropylmalate synthase"/>
    <property type="match status" value="1"/>
</dbReference>
<dbReference type="FunFam" id="3.20.20.70:FF:000010">
    <property type="entry name" value="2-isopropylmalate synthase"/>
    <property type="match status" value="1"/>
</dbReference>
<dbReference type="FunFam" id="3.30.160.270:FF:000001">
    <property type="entry name" value="2-isopropylmalate synthase"/>
    <property type="match status" value="1"/>
</dbReference>
<dbReference type="Gene3D" id="1.10.238.260">
    <property type="match status" value="1"/>
</dbReference>
<dbReference type="Gene3D" id="3.30.160.270">
    <property type="match status" value="1"/>
</dbReference>
<dbReference type="Gene3D" id="3.20.20.70">
    <property type="entry name" value="Aldolase class I"/>
    <property type="match status" value="1"/>
</dbReference>
<dbReference type="HAMAP" id="MF_01025">
    <property type="entry name" value="LeuA_type1"/>
    <property type="match status" value="1"/>
</dbReference>
<dbReference type="InterPro" id="IPR050073">
    <property type="entry name" value="2-IPM_HCS-like"/>
</dbReference>
<dbReference type="InterPro" id="IPR013709">
    <property type="entry name" value="2-isopropylmalate_synth_dimer"/>
</dbReference>
<dbReference type="InterPro" id="IPR002034">
    <property type="entry name" value="AIPM/Hcit_synth_CS"/>
</dbReference>
<dbReference type="InterPro" id="IPR013785">
    <property type="entry name" value="Aldolase_TIM"/>
</dbReference>
<dbReference type="InterPro" id="IPR054691">
    <property type="entry name" value="LeuA/HCS_post-cat"/>
</dbReference>
<dbReference type="InterPro" id="IPR036230">
    <property type="entry name" value="LeuA_allosteric_dom_sf"/>
</dbReference>
<dbReference type="InterPro" id="IPR005671">
    <property type="entry name" value="LeuA_bact_synth"/>
</dbReference>
<dbReference type="InterPro" id="IPR000891">
    <property type="entry name" value="PYR_CT"/>
</dbReference>
<dbReference type="NCBIfam" id="TIGR00973">
    <property type="entry name" value="leuA_bact"/>
    <property type="match status" value="1"/>
</dbReference>
<dbReference type="NCBIfam" id="NF002084">
    <property type="entry name" value="PRK00915.1-1"/>
    <property type="match status" value="1"/>
</dbReference>
<dbReference type="NCBIfam" id="NF002086">
    <property type="entry name" value="PRK00915.1-3"/>
    <property type="match status" value="1"/>
</dbReference>
<dbReference type="PANTHER" id="PTHR10277:SF9">
    <property type="entry name" value="2-ISOPROPYLMALATE SYNTHASE 1, CHLOROPLASTIC-RELATED"/>
    <property type="match status" value="1"/>
</dbReference>
<dbReference type="PANTHER" id="PTHR10277">
    <property type="entry name" value="HOMOCITRATE SYNTHASE-RELATED"/>
    <property type="match status" value="1"/>
</dbReference>
<dbReference type="Pfam" id="PF22617">
    <property type="entry name" value="HCS_D2"/>
    <property type="match status" value="1"/>
</dbReference>
<dbReference type="Pfam" id="PF00682">
    <property type="entry name" value="HMGL-like"/>
    <property type="match status" value="1"/>
</dbReference>
<dbReference type="Pfam" id="PF08502">
    <property type="entry name" value="LeuA_dimer"/>
    <property type="match status" value="1"/>
</dbReference>
<dbReference type="SMART" id="SM00917">
    <property type="entry name" value="LeuA_dimer"/>
    <property type="match status" value="1"/>
</dbReference>
<dbReference type="SUPFAM" id="SSF110921">
    <property type="entry name" value="2-isopropylmalate synthase LeuA, allosteric (dimerisation) domain"/>
    <property type="match status" value="1"/>
</dbReference>
<dbReference type="SUPFAM" id="SSF51569">
    <property type="entry name" value="Aldolase"/>
    <property type="match status" value="1"/>
</dbReference>
<dbReference type="PROSITE" id="PS00815">
    <property type="entry name" value="AIPM_HOMOCIT_SYNTH_1"/>
    <property type="match status" value="1"/>
</dbReference>
<dbReference type="PROSITE" id="PS00816">
    <property type="entry name" value="AIPM_HOMOCIT_SYNTH_2"/>
    <property type="match status" value="1"/>
</dbReference>
<dbReference type="PROSITE" id="PS50991">
    <property type="entry name" value="PYR_CT"/>
    <property type="match status" value="1"/>
</dbReference>
<organism>
    <name type="scientific">Escherichia coli O1:K1 / APEC</name>
    <dbReference type="NCBI Taxonomy" id="405955"/>
    <lineage>
        <taxon>Bacteria</taxon>
        <taxon>Pseudomonadati</taxon>
        <taxon>Pseudomonadota</taxon>
        <taxon>Gammaproteobacteria</taxon>
        <taxon>Enterobacterales</taxon>
        <taxon>Enterobacteriaceae</taxon>
        <taxon>Escherichia</taxon>
    </lineage>
</organism>
<protein>
    <recommendedName>
        <fullName evidence="1">2-isopropylmalate synthase</fullName>
        <ecNumber evidence="1">2.3.3.13</ecNumber>
    </recommendedName>
    <alternativeName>
        <fullName evidence="1">Alpha-IPM synthase</fullName>
    </alternativeName>
    <alternativeName>
        <fullName evidence="1">Alpha-isopropylmalate synthase</fullName>
    </alternativeName>
</protein>
<proteinExistence type="inferred from homology"/>
<feature type="chain" id="PRO_1000149191" description="2-isopropylmalate synthase">
    <location>
        <begin position="1"/>
        <end position="523"/>
    </location>
</feature>
<feature type="domain" description="Pyruvate carboxyltransferase" evidence="1">
    <location>
        <begin position="5"/>
        <end position="267"/>
    </location>
</feature>
<feature type="region of interest" description="Regulatory domain" evidence="1">
    <location>
        <begin position="392"/>
        <end position="523"/>
    </location>
</feature>
<feature type="binding site" evidence="1">
    <location>
        <position position="14"/>
    </location>
    <ligand>
        <name>Mn(2+)</name>
        <dbReference type="ChEBI" id="CHEBI:29035"/>
    </ligand>
</feature>
<feature type="binding site" evidence="1">
    <location>
        <position position="202"/>
    </location>
    <ligand>
        <name>Mn(2+)</name>
        <dbReference type="ChEBI" id="CHEBI:29035"/>
    </ligand>
</feature>
<feature type="binding site" evidence="1">
    <location>
        <position position="204"/>
    </location>
    <ligand>
        <name>Mn(2+)</name>
        <dbReference type="ChEBI" id="CHEBI:29035"/>
    </ligand>
</feature>
<feature type="binding site" evidence="1">
    <location>
        <position position="238"/>
    </location>
    <ligand>
        <name>Mn(2+)</name>
        <dbReference type="ChEBI" id="CHEBI:29035"/>
    </ligand>
</feature>
<comment type="function">
    <text evidence="1">Catalyzes the condensation of the acetyl group of acetyl-CoA with 3-methyl-2-oxobutanoate (2-ketoisovalerate) to form 3-carboxy-3-hydroxy-4-methylpentanoate (2-isopropylmalate).</text>
</comment>
<comment type="catalytic activity">
    <reaction evidence="1">
        <text>3-methyl-2-oxobutanoate + acetyl-CoA + H2O = (2S)-2-isopropylmalate + CoA + H(+)</text>
        <dbReference type="Rhea" id="RHEA:21524"/>
        <dbReference type="ChEBI" id="CHEBI:1178"/>
        <dbReference type="ChEBI" id="CHEBI:11851"/>
        <dbReference type="ChEBI" id="CHEBI:15377"/>
        <dbReference type="ChEBI" id="CHEBI:15378"/>
        <dbReference type="ChEBI" id="CHEBI:57287"/>
        <dbReference type="ChEBI" id="CHEBI:57288"/>
        <dbReference type="EC" id="2.3.3.13"/>
    </reaction>
</comment>
<comment type="cofactor">
    <cofactor evidence="1">
        <name>Mn(2+)</name>
        <dbReference type="ChEBI" id="CHEBI:29035"/>
    </cofactor>
</comment>
<comment type="pathway">
    <text evidence="1">Amino-acid biosynthesis; L-leucine biosynthesis; L-leucine from 3-methyl-2-oxobutanoate: step 1/4.</text>
</comment>
<comment type="subunit">
    <text evidence="1">Homodimer.</text>
</comment>
<comment type="subcellular location">
    <subcellularLocation>
        <location evidence="1">Cytoplasm</location>
    </subcellularLocation>
</comment>
<comment type="similarity">
    <text evidence="1">Belongs to the alpha-IPM synthase/homocitrate synthase family. LeuA type 1 subfamily.</text>
</comment>
<name>LEU1_ECOK1</name>
<gene>
    <name evidence="1" type="primary">leuA</name>
    <name type="ordered locus">Ecok1_00680</name>
    <name type="ORF">APECO1_1909</name>
</gene>
<evidence type="ECO:0000255" key="1">
    <source>
        <dbReference type="HAMAP-Rule" id="MF_01025"/>
    </source>
</evidence>
<reference key="1">
    <citation type="journal article" date="2007" name="J. Bacteriol.">
        <title>The genome sequence of avian pathogenic Escherichia coli strain O1:K1:H7 shares strong similarities with human extraintestinal pathogenic E. coli genomes.</title>
        <authorList>
            <person name="Johnson T.J."/>
            <person name="Kariyawasam S."/>
            <person name="Wannemuehler Y."/>
            <person name="Mangiamele P."/>
            <person name="Johnson S.J."/>
            <person name="Doetkott C."/>
            <person name="Skyberg J.A."/>
            <person name="Lynne A.M."/>
            <person name="Johnson J.R."/>
            <person name="Nolan L.K."/>
        </authorList>
    </citation>
    <scope>NUCLEOTIDE SEQUENCE [LARGE SCALE GENOMIC DNA]</scope>
</reference>
<sequence length="523" mass="57284">MSQQVIIFDTTLRDGEQALQASLSVKEKLQIALALERMGVDVMEVGFPVSSPGDFESVQTIARQVKNSRVCALARCVEKDIDVAAESLKVAEAFRIHTFIATSPMHIATKLRSTLDEVIERAIYMVKRARNYTDDVEFSCEDAGRTPIADLARVVEAAINAGATTINIPDTVGYTMPFEFAGIISGLYERVPNIDKAIISVHTHDDLGLAVGNSLAAVHAGARQVEGAMNGIGERAGNCSLEEVIMAIKVRKDILNVHTAINHQEIWRTSQLVSQICNMPIPANKAIVGSGAFAHSSGIHQDGVLKNRENYEIMTPESIGLNQIQLNLTSRSGRAAVKHRMDEMGYKESEYNLDNLYDAFLKLADKKGQVFDYDLEALAFIGKQQEEPEHFRLDYFSVQSGSNDIATAAVKLACGEEVKAEAANGNGPVDAVYQAINRITDYNVELVKYSLTAKGHGKDALGQVDIVANYNGRRFHGVGLATDIVESSAKAMVHVLNNIWRAAEVEKELQRKAQHNENNKETV</sequence>